<sequence>MAMTMRLDVVSVEGSLFSGIVESVVAPAEMGAVGIYPGHAPLLTRLKPGAVRLRIPYQAEEEIVYVSGGMLEVQPYKVTLLADVAMREKALAEADLHAEKHRAEAVLKDRVTADAYARLEVELAKALTYVQGVQKLRRRGF</sequence>
<comment type="function">
    <text evidence="1">Produces ATP from ADP in the presence of a proton gradient across the membrane.</text>
</comment>
<comment type="subunit">
    <text>F-type ATPases have 2 components, CF(1) - the catalytic core - and CF(0) - the membrane proton channel. CF(1) has five subunits: alpha(3), beta(3), gamma(1), delta(1), epsilon(1). CF(0) has three main subunits: a, b and c.</text>
</comment>
<comment type="subcellular location">
    <subcellularLocation>
        <location evidence="1">Cell inner membrane</location>
        <topology evidence="1">Peripheral membrane protein</topology>
    </subcellularLocation>
</comment>
<comment type="similarity">
    <text evidence="1">Belongs to the ATPase epsilon chain family.</text>
</comment>
<proteinExistence type="inferred from homology"/>
<gene>
    <name evidence="1" type="primary">atpC1</name>
    <name type="ordered locus">Tbd_1742</name>
</gene>
<protein>
    <recommendedName>
        <fullName evidence="1">ATP synthase epsilon chain 1</fullName>
    </recommendedName>
    <alternativeName>
        <fullName evidence="1">ATP synthase F1 sector epsilon subunit 1</fullName>
    </alternativeName>
    <alternativeName>
        <fullName evidence="1">F-ATPase epsilon subunit 1</fullName>
    </alternativeName>
</protein>
<organism>
    <name type="scientific">Thiobacillus denitrificans (strain ATCC 25259 / T1)</name>
    <dbReference type="NCBI Taxonomy" id="292415"/>
    <lineage>
        <taxon>Bacteria</taxon>
        <taxon>Pseudomonadati</taxon>
        <taxon>Pseudomonadota</taxon>
        <taxon>Betaproteobacteria</taxon>
        <taxon>Nitrosomonadales</taxon>
        <taxon>Thiobacillaceae</taxon>
        <taxon>Thiobacillus</taxon>
    </lineage>
</organism>
<keyword id="KW-0066">ATP synthesis</keyword>
<keyword id="KW-0997">Cell inner membrane</keyword>
<keyword id="KW-1003">Cell membrane</keyword>
<keyword id="KW-0139">CF(1)</keyword>
<keyword id="KW-0375">Hydrogen ion transport</keyword>
<keyword id="KW-0406">Ion transport</keyword>
<keyword id="KW-0472">Membrane</keyword>
<keyword id="KW-1185">Reference proteome</keyword>
<keyword id="KW-0813">Transport</keyword>
<name>ATPE1_THIDA</name>
<evidence type="ECO:0000255" key="1">
    <source>
        <dbReference type="HAMAP-Rule" id="MF_00530"/>
    </source>
</evidence>
<reference key="1">
    <citation type="journal article" date="2006" name="J. Bacteriol.">
        <title>The genome sequence of the obligately chemolithoautotrophic, facultatively anaerobic bacterium Thiobacillus denitrificans.</title>
        <authorList>
            <person name="Beller H.R."/>
            <person name="Chain P.S."/>
            <person name="Letain T.E."/>
            <person name="Chakicherla A."/>
            <person name="Larimer F.W."/>
            <person name="Richardson P.M."/>
            <person name="Coleman M.A."/>
            <person name="Wood A.P."/>
            <person name="Kelly D.P."/>
        </authorList>
    </citation>
    <scope>NUCLEOTIDE SEQUENCE [LARGE SCALE GENOMIC DNA]</scope>
    <source>
        <strain>ATCC 25259 / T1</strain>
    </source>
</reference>
<feature type="chain" id="PRO_0000265917" description="ATP synthase epsilon chain 1">
    <location>
        <begin position="1"/>
        <end position="141"/>
    </location>
</feature>
<dbReference type="EMBL" id="CP000116">
    <property type="protein sequence ID" value="AAZ97695.1"/>
    <property type="molecule type" value="Genomic_DNA"/>
</dbReference>
<dbReference type="RefSeq" id="WP_011312254.1">
    <property type="nucleotide sequence ID" value="NC_007404.1"/>
</dbReference>
<dbReference type="SMR" id="Q3SI38"/>
<dbReference type="STRING" id="292415.Tbd_1742"/>
<dbReference type="KEGG" id="tbd:Tbd_1742"/>
<dbReference type="eggNOG" id="COG0355">
    <property type="taxonomic scope" value="Bacteria"/>
</dbReference>
<dbReference type="HOGENOM" id="CLU_084338_2_0_4"/>
<dbReference type="OrthoDB" id="9791445at2"/>
<dbReference type="Proteomes" id="UP000008291">
    <property type="component" value="Chromosome"/>
</dbReference>
<dbReference type="GO" id="GO:0005886">
    <property type="term" value="C:plasma membrane"/>
    <property type="evidence" value="ECO:0007669"/>
    <property type="project" value="UniProtKB-SubCell"/>
</dbReference>
<dbReference type="GO" id="GO:0045259">
    <property type="term" value="C:proton-transporting ATP synthase complex"/>
    <property type="evidence" value="ECO:0007669"/>
    <property type="project" value="UniProtKB-KW"/>
</dbReference>
<dbReference type="GO" id="GO:0005524">
    <property type="term" value="F:ATP binding"/>
    <property type="evidence" value="ECO:0007669"/>
    <property type="project" value="UniProtKB-UniRule"/>
</dbReference>
<dbReference type="GO" id="GO:0046933">
    <property type="term" value="F:proton-transporting ATP synthase activity, rotational mechanism"/>
    <property type="evidence" value="ECO:0007669"/>
    <property type="project" value="UniProtKB-UniRule"/>
</dbReference>
<dbReference type="CDD" id="cd12152">
    <property type="entry name" value="F1-ATPase_delta"/>
    <property type="match status" value="1"/>
</dbReference>
<dbReference type="FunFam" id="2.60.15.10:FF:000001">
    <property type="entry name" value="ATP synthase epsilon chain"/>
    <property type="match status" value="1"/>
</dbReference>
<dbReference type="Gene3D" id="2.60.15.10">
    <property type="entry name" value="F0F1 ATP synthase delta/epsilon subunit, N-terminal"/>
    <property type="match status" value="1"/>
</dbReference>
<dbReference type="HAMAP" id="MF_00530">
    <property type="entry name" value="ATP_synth_epsil_bac"/>
    <property type="match status" value="1"/>
</dbReference>
<dbReference type="InterPro" id="IPR001469">
    <property type="entry name" value="ATP_synth_F1_dsu/esu"/>
</dbReference>
<dbReference type="InterPro" id="IPR020546">
    <property type="entry name" value="ATP_synth_F1_dsu/esu_N"/>
</dbReference>
<dbReference type="InterPro" id="IPR036771">
    <property type="entry name" value="ATPsynth_dsu/esu_N"/>
</dbReference>
<dbReference type="NCBIfam" id="TIGR01216">
    <property type="entry name" value="ATP_synt_epsi"/>
    <property type="match status" value="1"/>
</dbReference>
<dbReference type="NCBIfam" id="NF001847">
    <property type="entry name" value="PRK00571.1-4"/>
    <property type="match status" value="1"/>
</dbReference>
<dbReference type="PANTHER" id="PTHR13822">
    <property type="entry name" value="ATP SYNTHASE DELTA/EPSILON CHAIN"/>
    <property type="match status" value="1"/>
</dbReference>
<dbReference type="PANTHER" id="PTHR13822:SF10">
    <property type="entry name" value="ATP SYNTHASE EPSILON CHAIN, CHLOROPLASTIC"/>
    <property type="match status" value="1"/>
</dbReference>
<dbReference type="Pfam" id="PF02823">
    <property type="entry name" value="ATP-synt_DE_N"/>
    <property type="match status" value="1"/>
</dbReference>
<dbReference type="SUPFAM" id="SSF51344">
    <property type="entry name" value="Epsilon subunit of F1F0-ATP synthase N-terminal domain"/>
    <property type="match status" value="1"/>
</dbReference>
<accession>Q3SI38</accession>